<feature type="chain" id="PRO_0000222784" description="Non-structural protein 4">
    <location>
        <begin position="1"/>
        <end position="727"/>
    </location>
</feature>
<feature type="region of interest" description="Disordered" evidence="1">
    <location>
        <begin position="1"/>
        <end position="38"/>
    </location>
</feature>
<feature type="region of interest" description="Disordered" evidence="1">
    <location>
        <begin position="673"/>
        <end position="727"/>
    </location>
</feature>
<feature type="compositionally biased region" description="Polar residues" evidence="1">
    <location>
        <begin position="17"/>
        <end position="38"/>
    </location>
</feature>
<feature type="compositionally biased region" description="Basic residues" evidence="1">
    <location>
        <begin position="712"/>
        <end position="727"/>
    </location>
</feature>
<feature type="sequence conflict" description="In Ref. 2; BAA00483." evidence="2" ref="2">
    <original>L</original>
    <variation>A</variation>
    <location>
        <position position="417"/>
    </location>
</feature>
<feature type="sequence conflict" description="In Ref. 2; BAA00483." evidence="2" ref="2">
    <original>A</original>
    <variation>T</variation>
    <location>
        <position position="421"/>
    </location>
</feature>
<feature type="sequence conflict" description="In Ref. 2; BAA00483." evidence="2" ref="2">
    <original>E</original>
    <variation>G</variation>
    <location>
        <position position="497"/>
    </location>
</feature>
<feature type="sequence conflict" description="In Ref. 2; BAA00483." evidence="2" ref="2">
    <original>Q</original>
    <variation>R</variation>
    <location>
        <position position="663"/>
    </location>
</feature>
<protein>
    <recommendedName>
        <fullName>Non-structural protein 4</fullName>
        <shortName>Pns4</shortName>
    </recommendedName>
</protein>
<reference key="1">
    <citation type="journal article" date="1990" name="Virology">
        <title>Sequence analysis of rice dwarf phytoreovirus genome segments S4, S5, and S6: comparison with the equivalent wound tumor virus segments.</title>
        <authorList>
            <person name="Suzuki N."/>
            <person name="Watanabe Y."/>
            <person name="Kusano T."/>
            <person name="Kitagawa Y."/>
        </authorList>
    </citation>
    <scope>NUCLEOTIDE SEQUENCE [GENOMIC RNA]</scope>
</reference>
<reference key="2">
    <citation type="journal article" date="1990" name="J. Gen. Virol.">
        <title>Nucleotide sequence of rice dwarf virus genome segment 4.</title>
        <authorList>
            <person name="Uyeda I."/>
            <person name="Kudo H."/>
            <person name="Yamada N."/>
            <person name="Matsumura T."/>
            <person name="Shikata E."/>
        </authorList>
    </citation>
    <scope>NUCLEOTIDE SEQUENCE [GENOMIC RNA]</scope>
</reference>
<organism>
    <name type="scientific">Rice dwarf virus (isolate Akita)</name>
    <name type="common">RDV</name>
    <dbReference type="NCBI Taxonomy" id="142803"/>
    <lineage>
        <taxon>Viruses</taxon>
        <taxon>Riboviria</taxon>
        <taxon>Orthornavirae</taxon>
        <taxon>Duplornaviricota</taxon>
        <taxon>Resentoviricetes</taxon>
        <taxon>Reovirales</taxon>
        <taxon>Sedoreoviridae</taxon>
        <taxon>Phytoreovirus</taxon>
        <taxon>Rice dwarf virus</taxon>
    </lineage>
</organism>
<organismHost>
    <name type="scientific">Alopecurus aequalis</name>
    <dbReference type="NCBI Taxonomy" id="114194"/>
</organismHost>
<organismHost>
    <name type="scientific">Echinochloa crus-galli</name>
    <name type="common">Barnyard grass</name>
    <name type="synonym">Panicum crus-galli</name>
    <dbReference type="NCBI Taxonomy" id="90397"/>
</organismHost>
<organismHost>
    <name type="scientific">Nephotettix cincticeps</name>
    <name type="common">Green rice leafhopper</name>
    <name type="synonym">Selenocephalus cincticeps</name>
    <dbReference type="NCBI Taxonomy" id="94400"/>
</organismHost>
<organismHost>
    <name type="scientific">Oryza sativa</name>
    <name type="common">Rice</name>
    <dbReference type="NCBI Taxonomy" id="4530"/>
</organismHost>
<organismHost>
    <name type="scientific">Paspalum</name>
    <dbReference type="NCBI Taxonomy" id="147271"/>
</organismHost>
<dbReference type="EMBL" id="X54622">
    <property type="protein sequence ID" value="CAA38442.1"/>
    <property type="molecule type" value="Genomic_RNA"/>
</dbReference>
<dbReference type="EMBL" id="D00608">
    <property type="protein sequence ID" value="BAA00483.1"/>
    <property type="molecule type" value="Genomic_RNA"/>
</dbReference>
<dbReference type="PIR" id="A45342">
    <property type="entry name" value="A45342"/>
</dbReference>
<proteinExistence type="predicted"/>
<sequence length="727" mass="79837">MNQSRSFVTGRGRDLSRTPSALSSNSETPGSMSSPSEGKTNAWVNSAYVSNFPALGQSQGLPSHKCSALALRSSQTTYIINFPRQHWNIMTFPNQSEAILANVASYAKDLDGKNSFAVSDTLKIALVLSPTEKRLFRNDTLSHLADVHMYVLDPAEAEGKNLSDSETVYVYVTPPNLTDVKPTTVVLTECAANAKSANDLRQYIVTQLRKMPSLPFGCTTYAPGFLSDGVCKEHPNLFTSEELGAKIKVLTKLLIRCATSMSQDGSNAFCPKHPKVKIVHESNATSYVLFNRPNGMVATNLILSDLPDDDCPTCWILKLAISEARFYALDGHHRCRSGIITSSVFRYLASIVIRVRMDSVLAPSDASSTDHAALVNMMCGIIQNTPAMRQLGISTGSEKVNNRSMRVIIMQENADRLTQMAALYHLFLDYFGALNGWGFYFCSLTSLYGEFHGFSVGFSGEITHVNVASVIAKNWDTQSGIDNILEFKTITIPVHNEDIVCMVERTLAESFEVVMNEHFNGASTIKVRRNGGDSRFNFTISNPRDAFLLLQKAVADGGILQKILCRAMLKAITSHALRADREVQDVSFSFVLKMRLNPVNKSDSKSSELAHTAQMNSLPVFLASTPFTMQLGTLRDALLKKTENVTVINMARTTEEVSKDALQEILKSIGGSSMTLEDTAEPVSDAESIPDPPPRSWASEDEAVNSPQIYSSRRKARKARAASKLSK</sequence>
<evidence type="ECO:0000256" key="1">
    <source>
        <dbReference type="SAM" id="MobiDB-lite"/>
    </source>
</evidence>
<evidence type="ECO:0000305" key="2"/>
<accession>P22474</accession>
<name>NSP4_RDVA</name>